<dbReference type="EC" id="3.3.2.6" evidence="2"/>
<dbReference type="EC" id="3.4.11.4" evidence="1"/>
<dbReference type="EMBL" id="S87522">
    <property type="protein sequence ID" value="AAB21778.1"/>
    <property type="molecule type" value="mRNA"/>
</dbReference>
<dbReference type="EMBL" id="AABR07056638">
    <property type="status" value="NOT_ANNOTATED_CDS"/>
    <property type="molecule type" value="Genomic_DNA"/>
</dbReference>
<dbReference type="EMBL" id="BC099819">
    <property type="protein sequence ID" value="AAH99819.1"/>
    <property type="molecule type" value="mRNA"/>
</dbReference>
<dbReference type="PIR" id="S20444">
    <property type="entry name" value="S20444"/>
</dbReference>
<dbReference type="RefSeq" id="NP_001025202.1">
    <property type="nucleotide sequence ID" value="NM_001030031.2"/>
</dbReference>
<dbReference type="SMR" id="P30349"/>
<dbReference type="FunCoup" id="P30349">
    <property type="interactions" value="2297"/>
</dbReference>
<dbReference type="IntAct" id="P30349">
    <property type="interactions" value="2"/>
</dbReference>
<dbReference type="STRING" id="10116.ENSRNOP00000005930"/>
<dbReference type="ChEMBL" id="CHEMBL2400"/>
<dbReference type="MEROPS" id="M01.004"/>
<dbReference type="iPTMnet" id="P30349"/>
<dbReference type="PhosphoSitePlus" id="P30349"/>
<dbReference type="jPOST" id="P30349"/>
<dbReference type="PaxDb" id="10116-ENSRNOP00000005930"/>
<dbReference type="PeptideAtlas" id="P30349"/>
<dbReference type="Ensembl" id="ENSRNOT00000005930.5">
    <property type="protein sequence ID" value="ENSRNOP00000005930.4"/>
    <property type="gene ID" value="ENSRNOG00000004494.6"/>
</dbReference>
<dbReference type="GeneID" id="299732"/>
<dbReference type="KEGG" id="rno:299732"/>
<dbReference type="UCSC" id="RGD:1311333">
    <property type="organism name" value="rat"/>
</dbReference>
<dbReference type="AGR" id="RGD:1311333"/>
<dbReference type="CTD" id="4048"/>
<dbReference type="RGD" id="1311333">
    <property type="gene designation" value="Lta4h"/>
</dbReference>
<dbReference type="eggNOG" id="KOG1047">
    <property type="taxonomic scope" value="Eukaryota"/>
</dbReference>
<dbReference type="GeneTree" id="ENSGT00940000156375"/>
<dbReference type="HOGENOM" id="CLU_014505_0_0_1"/>
<dbReference type="InParanoid" id="P30349"/>
<dbReference type="OMA" id="CTALQWM"/>
<dbReference type="OrthoDB" id="79562at2759"/>
<dbReference type="TreeFam" id="TF300758"/>
<dbReference type="BRENDA" id="3.3.2.6">
    <property type="organism ID" value="5301"/>
</dbReference>
<dbReference type="Reactome" id="R-RNO-2142691">
    <property type="pathway name" value="Synthesis of Leukotrienes (LT) and Eoxins (EX)"/>
</dbReference>
<dbReference type="Reactome" id="R-RNO-6798695">
    <property type="pathway name" value="Neutrophil degranulation"/>
</dbReference>
<dbReference type="Reactome" id="R-RNO-9018676">
    <property type="pathway name" value="Biosynthesis of D-series resolvins"/>
</dbReference>
<dbReference type="Reactome" id="R-RNO-9018681">
    <property type="pathway name" value="Biosynthesis of protectins"/>
</dbReference>
<dbReference type="Reactome" id="R-RNO-9018896">
    <property type="pathway name" value="Biosynthesis of E-series 18(S)-resolvins"/>
</dbReference>
<dbReference type="Reactome" id="R-RNO-9020265">
    <property type="pathway name" value="Biosynthesis of aspirin-triggered D-series resolvins"/>
</dbReference>
<dbReference type="Reactome" id="R-RNO-9023661">
    <property type="pathway name" value="Biosynthesis of E-series 18(R)-resolvins"/>
</dbReference>
<dbReference type="UniPathway" id="UPA00878"/>
<dbReference type="PRO" id="PR:P30349"/>
<dbReference type="Proteomes" id="UP000002494">
    <property type="component" value="Chromosome 7"/>
</dbReference>
<dbReference type="Bgee" id="ENSRNOG00000004494">
    <property type="expression patterns" value="Expressed in jejunum and 20 other cell types or tissues"/>
</dbReference>
<dbReference type="GO" id="GO:0005829">
    <property type="term" value="C:cytosol"/>
    <property type="evidence" value="ECO:0000318"/>
    <property type="project" value="GO_Central"/>
</dbReference>
<dbReference type="GO" id="GO:0005654">
    <property type="term" value="C:nucleoplasm"/>
    <property type="evidence" value="ECO:0007669"/>
    <property type="project" value="Ensembl"/>
</dbReference>
<dbReference type="GO" id="GO:0005634">
    <property type="term" value="C:nucleus"/>
    <property type="evidence" value="ECO:0000318"/>
    <property type="project" value="GO_Central"/>
</dbReference>
<dbReference type="GO" id="GO:0004177">
    <property type="term" value="F:aminopeptidase activity"/>
    <property type="evidence" value="ECO:0000250"/>
    <property type="project" value="UniProtKB"/>
</dbReference>
<dbReference type="GO" id="GO:0004301">
    <property type="term" value="F:epoxide hydrolase activity"/>
    <property type="evidence" value="ECO:0000250"/>
    <property type="project" value="UniProtKB"/>
</dbReference>
<dbReference type="GO" id="GO:0004463">
    <property type="term" value="F:leukotriene-A4 hydrolase activity"/>
    <property type="evidence" value="ECO:0000314"/>
    <property type="project" value="RGD"/>
</dbReference>
<dbReference type="GO" id="GO:0070006">
    <property type="term" value="F:metalloaminopeptidase activity"/>
    <property type="evidence" value="ECO:0000266"/>
    <property type="project" value="RGD"/>
</dbReference>
<dbReference type="GO" id="GO:0045148">
    <property type="term" value="F:tripeptide aminopeptidase activity"/>
    <property type="evidence" value="ECO:0007669"/>
    <property type="project" value="UniProtKB-EC"/>
</dbReference>
<dbReference type="GO" id="GO:0008270">
    <property type="term" value="F:zinc ion binding"/>
    <property type="evidence" value="ECO:0000250"/>
    <property type="project" value="UniProtKB"/>
</dbReference>
<dbReference type="GO" id="GO:0019370">
    <property type="term" value="P:leukotriene biosynthetic process"/>
    <property type="evidence" value="ECO:0000250"/>
    <property type="project" value="UniProtKB"/>
</dbReference>
<dbReference type="GO" id="GO:0006691">
    <property type="term" value="P:leukotriene metabolic process"/>
    <property type="evidence" value="ECO:0000314"/>
    <property type="project" value="RGD"/>
</dbReference>
<dbReference type="GO" id="GO:0043171">
    <property type="term" value="P:peptide catabolic process"/>
    <property type="evidence" value="ECO:0000250"/>
    <property type="project" value="UniProtKB"/>
</dbReference>
<dbReference type="GO" id="GO:0006508">
    <property type="term" value="P:proteolysis"/>
    <property type="evidence" value="ECO:0007669"/>
    <property type="project" value="UniProtKB-KW"/>
</dbReference>
<dbReference type="GO" id="GO:0043434">
    <property type="term" value="P:response to peptide hormone"/>
    <property type="evidence" value="ECO:0000270"/>
    <property type="project" value="RGD"/>
</dbReference>
<dbReference type="GO" id="GO:0010043">
    <property type="term" value="P:response to zinc ion"/>
    <property type="evidence" value="ECO:0000270"/>
    <property type="project" value="RGD"/>
</dbReference>
<dbReference type="GO" id="GO:0060509">
    <property type="term" value="P:type I pneumocyte differentiation"/>
    <property type="evidence" value="ECO:0000270"/>
    <property type="project" value="RGD"/>
</dbReference>
<dbReference type="CDD" id="cd09599">
    <property type="entry name" value="M1_LTA4H"/>
    <property type="match status" value="1"/>
</dbReference>
<dbReference type="FunFam" id="1.10.390.10:FF:000003">
    <property type="entry name" value="Leukotriene A(4) hydrolase"/>
    <property type="match status" value="1"/>
</dbReference>
<dbReference type="FunFam" id="1.25.40.320:FF:000002">
    <property type="entry name" value="Leukotriene A(4) hydrolase"/>
    <property type="match status" value="1"/>
</dbReference>
<dbReference type="FunFam" id="2.60.40.1730:FF:000004">
    <property type="entry name" value="Leukotriene A(4) hydrolase"/>
    <property type="match status" value="1"/>
</dbReference>
<dbReference type="FunFam" id="3.30.2010.30:FF:000001">
    <property type="entry name" value="Leukotriene A(4) hydrolase"/>
    <property type="match status" value="1"/>
</dbReference>
<dbReference type="Gene3D" id="3.30.2010.30">
    <property type="match status" value="1"/>
</dbReference>
<dbReference type="Gene3D" id="1.10.390.10">
    <property type="entry name" value="Neutral Protease Domain 2"/>
    <property type="match status" value="1"/>
</dbReference>
<dbReference type="Gene3D" id="1.25.40.320">
    <property type="entry name" value="Peptidase M1, leukotriene A4 hydrolase/aminopeptidase C-terminal domain"/>
    <property type="match status" value="1"/>
</dbReference>
<dbReference type="Gene3D" id="2.60.40.1730">
    <property type="entry name" value="tricorn interacting facor f3 domain"/>
    <property type="match status" value="1"/>
</dbReference>
<dbReference type="InterPro" id="IPR045357">
    <property type="entry name" value="Aminopeptidase_N-like_N"/>
</dbReference>
<dbReference type="InterPro" id="IPR042097">
    <property type="entry name" value="Aminopeptidase_N-like_N_sf"/>
</dbReference>
<dbReference type="InterPro" id="IPR016024">
    <property type="entry name" value="ARM-type_fold"/>
</dbReference>
<dbReference type="InterPro" id="IPR012777">
    <property type="entry name" value="LTA4H"/>
</dbReference>
<dbReference type="InterPro" id="IPR049980">
    <property type="entry name" value="LTA4H_cat"/>
</dbReference>
<dbReference type="InterPro" id="IPR038502">
    <property type="entry name" value="M1_LTA-4_hydro/amino_C_sf"/>
</dbReference>
<dbReference type="InterPro" id="IPR034015">
    <property type="entry name" value="M1_LTA4H"/>
</dbReference>
<dbReference type="InterPro" id="IPR001930">
    <property type="entry name" value="Peptidase_M1"/>
</dbReference>
<dbReference type="InterPro" id="IPR015211">
    <property type="entry name" value="Peptidase_M1_C"/>
</dbReference>
<dbReference type="InterPro" id="IPR014782">
    <property type="entry name" value="Peptidase_M1_dom"/>
</dbReference>
<dbReference type="InterPro" id="IPR027268">
    <property type="entry name" value="Peptidase_M4/M1_CTD_sf"/>
</dbReference>
<dbReference type="NCBIfam" id="TIGR02411">
    <property type="entry name" value="leuko_A4_hydro"/>
    <property type="match status" value="1"/>
</dbReference>
<dbReference type="PANTHER" id="PTHR45726">
    <property type="entry name" value="LEUKOTRIENE A-4 HYDROLASE"/>
    <property type="match status" value="1"/>
</dbReference>
<dbReference type="PANTHER" id="PTHR45726:SF3">
    <property type="entry name" value="LEUKOTRIENE A-4 HYDROLASE"/>
    <property type="match status" value="1"/>
</dbReference>
<dbReference type="Pfam" id="PF09127">
    <property type="entry name" value="Leuk-A4-hydro_C"/>
    <property type="match status" value="1"/>
</dbReference>
<dbReference type="Pfam" id="PF01433">
    <property type="entry name" value="Peptidase_M1"/>
    <property type="match status" value="1"/>
</dbReference>
<dbReference type="Pfam" id="PF17900">
    <property type="entry name" value="Peptidase_M1_N"/>
    <property type="match status" value="1"/>
</dbReference>
<dbReference type="PRINTS" id="PR00756">
    <property type="entry name" value="ALADIPTASE"/>
</dbReference>
<dbReference type="SMART" id="SM01263">
    <property type="entry name" value="Leuk-A4-hydro_C"/>
    <property type="match status" value="1"/>
</dbReference>
<dbReference type="SUPFAM" id="SSF48371">
    <property type="entry name" value="ARM repeat"/>
    <property type="match status" value="1"/>
</dbReference>
<dbReference type="SUPFAM" id="SSF63737">
    <property type="entry name" value="Leukotriene A4 hydrolase N-terminal domain"/>
    <property type="match status" value="1"/>
</dbReference>
<dbReference type="SUPFAM" id="SSF55486">
    <property type="entry name" value="Metalloproteases ('zincins'), catalytic domain"/>
    <property type="match status" value="1"/>
</dbReference>
<dbReference type="PROSITE" id="PS00142">
    <property type="entry name" value="ZINC_PROTEASE"/>
    <property type="match status" value="1"/>
</dbReference>
<comment type="function">
    <text evidence="1 2">Bifunctional zinc metalloenzyme that comprises both epoxide hydrolase (EH) and aminopeptidase activities (By similarity). Acts as an epoxide hydrolase to catalyze the conversion of LTA4 to the pro-inflammatory mediator leukotriene B4 (LTB4) (PubMed:1544505). Also has aminopeptidase activity, with high affinity for N-terminal arginines of various synthetic tripeptides. In addition to its pro-inflammatory EH activity, may also counteract inflammation by its aminopeptidase activity, which inactivates by cleavage another neutrophil attractant, the tripeptide Pro-Gly-Pro (PGP), a bioactive fragment of collagen generated by the action of matrix metalloproteinase-9 (MMP9) and prolylendopeptidase (PREPL). Involved also in the biosynthesis of resolvin E1 and 18S-resolvin E1 from eicosapentaenoic acid, two lipid mediators that show potent anti-inflammatory and pro-resolving actions (By similarity).</text>
</comment>
<comment type="catalytic activity">
    <reaction evidence="2">
        <text>leukotriene A4 + H2O = leukotriene B4</text>
        <dbReference type="Rhea" id="RHEA:22324"/>
        <dbReference type="ChEBI" id="CHEBI:15377"/>
        <dbReference type="ChEBI" id="CHEBI:57461"/>
        <dbReference type="ChEBI" id="CHEBI:57463"/>
        <dbReference type="EC" id="3.3.2.6"/>
    </reaction>
    <physiologicalReaction direction="left-to-right" evidence="4">
        <dbReference type="Rhea" id="RHEA:22325"/>
    </physiologicalReaction>
</comment>
<comment type="catalytic activity">
    <reaction evidence="1">
        <text>(5S,6S)-epoxy-(18R)-hydroxy-(7E,9E,11Z,14Z,16E)-eicosapentaenoate + H2O = resolvin E1</text>
        <dbReference type="Rhea" id="RHEA:50272"/>
        <dbReference type="ChEBI" id="CHEBI:15377"/>
        <dbReference type="ChEBI" id="CHEBI:91000"/>
        <dbReference type="ChEBI" id="CHEBI:132219"/>
    </reaction>
    <physiologicalReaction direction="left-to-right" evidence="1">
        <dbReference type="Rhea" id="RHEA:50273"/>
    </physiologicalReaction>
</comment>
<comment type="catalytic activity">
    <reaction evidence="1">
        <text>(5S,6S)-epoxy-(18S)-hydroxy-(7E,9E,11Z,14Z,16E)-eicosapentaenoate + H2O = 18S-resolvin E1</text>
        <dbReference type="Rhea" id="RHEA:51988"/>
        <dbReference type="ChEBI" id="CHEBI:15377"/>
        <dbReference type="ChEBI" id="CHEBI:134661"/>
        <dbReference type="ChEBI" id="CHEBI:136057"/>
    </reaction>
    <physiologicalReaction direction="left-to-right" evidence="1">
        <dbReference type="Rhea" id="RHEA:51989"/>
    </physiologicalReaction>
</comment>
<comment type="catalytic activity">
    <reaction evidence="1">
        <text>Release of the N-terminal residue from a tripeptide.</text>
        <dbReference type="EC" id="3.4.11.4"/>
    </reaction>
</comment>
<comment type="cofactor">
    <cofactor evidence="1">
        <name>Zn(2+)</name>
        <dbReference type="ChEBI" id="CHEBI:29105"/>
    </cofactor>
    <text evidence="1">Binds 1 zinc ion per subunit.</text>
</comment>
<comment type="activity regulation">
    <text evidence="1 2">Inhibited by bestatin (By similarity). Inhibited by captopril (PubMed:1544505). The epoxide hydrolase activity is restrained by suicide inactivation that involves binding of LTA4 to Tyr-379. 4-(4-benzylphenyl)thiazol-2-amine (ARM1) selectively inhibits the epoxide hydrolase activity (By similarity).</text>
</comment>
<comment type="pathway">
    <text evidence="2">Lipid metabolism; leukotriene B4 biosynthesis.</text>
</comment>
<comment type="subunit">
    <text evidence="1">Monomer.</text>
</comment>
<comment type="subcellular location">
    <subcellularLocation>
        <location evidence="1">Cytoplasm</location>
    </subcellularLocation>
</comment>
<comment type="PTM">
    <text evidence="1">Phosphorylation at Ser-416 inhibits leukotriene-A4 hydrolase activity.</text>
</comment>
<comment type="similarity">
    <text evidence="3">Belongs to the peptidase M1 family.</text>
</comment>
<evidence type="ECO:0000250" key="1">
    <source>
        <dbReference type="UniProtKB" id="P09960"/>
    </source>
</evidence>
<evidence type="ECO:0000269" key="2">
    <source>
    </source>
</evidence>
<evidence type="ECO:0000305" key="3"/>
<evidence type="ECO:0000305" key="4">
    <source>
    </source>
</evidence>
<name>LKHA4_RAT</name>
<accession>P30349</accession>
<accession>Q499P2</accession>
<reference key="1">
    <citation type="journal article" date="1992" name="FEBS Lett.">
        <title>Molecular cloning and functional expression of rat leukotriene A4 hydrolase using the polymerase chain reaction.</title>
        <authorList>
            <person name="Makita N."/>
            <person name="Funk C.D."/>
            <person name="Imai E."/>
            <person name="Hoover R.L."/>
            <person name="Badr K.F."/>
        </authorList>
    </citation>
    <scope>NUCLEOTIDE SEQUENCE [MRNA]</scope>
    <scope>CATALYTIC ACTIVITY</scope>
    <scope>FUNCTION</scope>
    <scope>ACTIVITY REGULATION</scope>
</reference>
<reference key="2">
    <citation type="journal article" date="2004" name="Genome Res.">
        <title>The status, quality, and expansion of the NIH full-length cDNA project: the Mammalian Gene Collection (MGC).</title>
        <authorList>
            <consortium name="The MGC Project Team"/>
        </authorList>
    </citation>
    <scope>NUCLEOTIDE SEQUENCE [LARGE SCALE MRNA]</scope>
    <source>
        <tissue>Prostate</tissue>
    </source>
</reference>
<reference key="3">
    <citation type="journal article" date="2004" name="Nature">
        <title>Genome sequence of the Brown Norway rat yields insights into mammalian evolution.</title>
        <authorList>
            <person name="Gibbs R.A."/>
            <person name="Weinstock G.M."/>
            <person name="Metzker M.L."/>
            <person name="Muzny D.M."/>
            <person name="Sodergren E.J."/>
            <person name="Scherer S."/>
            <person name="Scott G."/>
            <person name="Steffen D."/>
            <person name="Worley K.C."/>
            <person name="Burch P.E."/>
            <person name="Okwuonu G."/>
            <person name="Hines S."/>
            <person name="Lewis L."/>
            <person name="Deramo C."/>
            <person name="Delgado O."/>
            <person name="Dugan-Rocha S."/>
            <person name="Miner G."/>
            <person name="Morgan M."/>
            <person name="Hawes A."/>
            <person name="Gill R."/>
            <person name="Holt R.A."/>
            <person name="Adams M.D."/>
            <person name="Amanatides P.G."/>
            <person name="Baden-Tillson H."/>
            <person name="Barnstead M."/>
            <person name="Chin S."/>
            <person name="Evans C.A."/>
            <person name="Ferriera S."/>
            <person name="Fosler C."/>
            <person name="Glodek A."/>
            <person name="Gu Z."/>
            <person name="Jennings D."/>
            <person name="Kraft C.L."/>
            <person name="Nguyen T."/>
            <person name="Pfannkoch C.M."/>
            <person name="Sitter C."/>
            <person name="Sutton G.G."/>
            <person name="Venter J.C."/>
            <person name="Woodage T."/>
            <person name="Smith D."/>
            <person name="Lee H.-M."/>
            <person name="Gustafson E."/>
            <person name="Cahill P."/>
            <person name="Kana A."/>
            <person name="Doucette-Stamm L."/>
            <person name="Weinstock K."/>
            <person name="Fechtel K."/>
            <person name="Weiss R.B."/>
            <person name="Dunn D.M."/>
            <person name="Green E.D."/>
            <person name="Blakesley R.W."/>
            <person name="Bouffard G.G."/>
            <person name="De Jong P.J."/>
            <person name="Osoegawa K."/>
            <person name="Zhu B."/>
            <person name="Marra M."/>
            <person name="Schein J."/>
            <person name="Bosdet I."/>
            <person name="Fjell C."/>
            <person name="Jones S."/>
            <person name="Krzywinski M."/>
            <person name="Mathewson C."/>
            <person name="Siddiqui A."/>
            <person name="Wye N."/>
            <person name="McPherson J."/>
            <person name="Zhao S."/>
            <person name="Fraser C.M."/>
            <person name="Shetty J."/>
            <person name="Shatsman S."/>
            <person name="Geer K."/>
            <person name="Chen Y."/>
            <person name="Abramzon S."/>
            <person name="Nierman W.C."/>
            <person name="Havlak P.H."/>
            <person name="Chen R."/>
            <person name="Durbin K.J."/>
            <person name="Egan A."/>
            <person name="Ren Y."/>
            <person name="Song X.-Z."/>
            <person name="Li B."/>
            <person name="Liu Y."/>
            <person name="Qin X."/>
            <person name="Cawley S."/>
            <person name="Cooney A.J."/>
            <person name="D'Souza L.M."/>
            <person name="Martin K."/>
            <person name="Wu J.Q."/>
            <person name="Gonzalez-Garay M.L."/>
            <person name="Jackson A.R."/>
            <person name="Kalafus K.J."/>
            <person name="McLeod M.P."/>
            <person name="Milosavljevic A."/>
            <person name="Virk D."/>
            <person name="Volkov A."/>
            <person name="Wheeler D.A."/>
            <person name="Zhang Z."/>
            <person name="Bailey J.A."/>
            <person name="Eichler E.E."/>
            <person name="Tuzun E."/>
            <person name="Birney E."/>
            <person name="Mongin E."/>
            <person name="Ureta-Vidal A."/>
            <person name="Woodwark C."/>
            <person name="Zdobnov E."/>
            <person name="Bork P."/>
            <person name="Suyama M."/>
            <person name="Torrents D."/>
            <person name="Alexandersson M."/>
            <person name="Trask B.J."/>
            <person name="Young J.M."/>
            <person name="Huang H."/>
            <person name="Wang H."/>
            <person name="Xing H."/>
            <person name="Daniels S."/>
            <person name="Gietzen D."/>
            <person name="Schmidt J."/>
            <person name="Stevens K."/>
            <person name="Vitt U."/>
            <person name="Wingrove J."/>
            <person name="Camara F."/>
            <person name="Mar Alba M."/>
            <person name="Abril J.F."/>
            <person name="Guigo R."/>
            <person name="Smit A."/>
            <person name="Dubchak I."/>
            <person name="Rubin E.M."/>
            <person name="Couronne O."/>
            <person name="Poliakov A."/>
            <person name="Huebner N."/>
            <person name="Ganten D."/>
            <person name="Goesele C."/>
            <person name="Hummel O."/>
            <person name="Kreitler T."/>
            <person name="Lee Y.-A."/>
            <person name="Monti J."/>
            <person name="Schulz H."/>
            <person name="Zimdahl H."/>
            <person name="Himmelbauer H."/>
            <person name="Lehrach H."/>
            <person name="Jacob H.J."/>
            <person name="Bromberg S."/>
            <person name="Gullings-Handley J."/>
            <person name="Jensen-Seaman M.I."/>
            <person name="Kwitek A.E."/>
            <person name="Lazar J."/>
            <person name="Pasko D."/>
            <person name="Tonellato P.J."/>
            <person name="Twigger S."/>
            <person name="Ponting C.P."/>
            <person name="Duarte J.M."/>
            <person name="Rice S."/>
            <person name="Goodstadt L."/>
            <person name="Beatson S.A."/>
            <person name="Emes R.D."/>
            <person name="Winter E.E."/>
            <person name="Webber C."/>
            <person name="Brandt P."/>
            <person name="Nyakatura G."/>
            <person name="Adetobi M."/>
            <person name="Chiaromonte F."/>
            <person name="Elnitski L."/>
            <person name="Eswara P."/>
            <person name="Hardison R.C."/>
            <person name="Hou M."/>
            <person name="Kolbe D."/>
            <person name="Makova K."/>
            <person name="Miller W."/>
            <person name="Nekrutenko A."/>
            <person name="Riemer C."/>
            <person name="Schwartz S."/>
            <person name="Taylor J."/>
            <person name="Yang S."/>
            <person name="Zhang Y."/>
            <person name="Lindpaintner K."/>
            <person name="Andrews T.D."/>
            <person name="Caccamo M."/>
            <person name="Clamp M."/>
            <person name="Clarke L."/>
            <person name="Curwen V."/>
            <person name="Durbin R.M."/>
            <person name="Eyras E."/>
            <person name="Searle S.M."/>
            <person name="Cooper G.M."/>
            <person name="Batzoglou S."/>
            <person name="Brudno M."/>
            <person name="Sidow A."/>
            <person name="Stone E.A."/>
            <person name="Payseur B.A."/>
            <person name="Bourque G."/>
            <person name="Lopez-Otin C."/>
            <person name="Puente X.S."/>
            <person name="Chakrabarti K."/>
            <person name="Chatterji S."/>
            <person name="Dewey C."/>
            <person name="Pachter L."/>
            <person name="Bray N."/>
            <person name="Yap V.B."/>
            <person name="Caspi A."/>
            <person name="Tesler G."/>
            <person name="Pevzner P.A."/>
            <person name="Haussler D."/>
            <person name="Roskin K.M."/>
            <person name="Baertsch R."/>
            <person name="Clawson H."/>
            <person name="Furey T.S."/>
            <person name="Hinrichs A.S."/>
            <person name="Karolchik D."/>
            <person name="Kent W.J."/>
            <person name="Rosenbloom K.R."/>
            <person name="Trumbower H."/>
            <person name="Weirauch M."/>
            <person name="Cooper D.N."/>
            <person name="Stenson P.D."/>
            <person name="Ma B."/>
            <person name="Brent M."/>
            <person name="Arumugam M."/>
            <person name="Shteynberg D."/>
            <person name="Copley R.R."/>
            <person name="Taylor M.S."/>
            <person name="Riethman H."/>
            <person name="Mudunuri U."/>
            <person name="Peterson J."/>
            <person name="Guyer M."/>
            <person name="Felsenfeld A."/>
            <person name="Old S."/>
            <person name="Mockrin S."/>
            <person name="Collins F.S."/>
        </authorList>
    </citation>
    <scope>NUCLEOTIDE SEQUENCE [LARGE SCALE GENOMIC DNA]</scope>
    <source>
        <strain>Brown Norway</strain>
    </source>
</reference>
<proteinExistence type="evidence at protein level"/>
<organism>
    <name type="scientific">Rattus norvegicus</name>
    <name type="common">Rat</name>
    <dbReference type="NCBI Taxonomy" id="10116"/>
    <lineage>
        <taxon>Eukaryota</taxon>
        <taxon>Metazoa</taxon>
        <taxon>Chordata</taxon>
        <taxon>Craniata</taxon>
        <taxon>Vertebrata</taxon>
        <taxon>Euteleostomi</taxon>
        <taxon>Mammalia</taxon>
        <taxon>Eutheria</taxon>
        <taxon>Euarchontoglires</taxon>
        <taxon>Glires</taxon>
        <taxon>Rodentia</taxon>
        <taxon>Myomorpha</taxon>
        <taxon>Muroidea</taxon>
        <taxon>Muridae</taxon>
        <taxon>Murinae</taxon>
        <taxon>Rattus</taxon>
    </lineage>
</organism>
<keyword id="KW-0007">Acetylation</keyword>
<keyword id="KW-0963">Cytoplasm</keyword>
<keyword id="KW-0378">Hydrolase</keyword>
<keyword id="KW-0434">Leukotriene biosynthesis</keyword>
<keyword id="KW-0479">Metal-binding</keyword>
<keyword id="KW-0482">Metalloprotease</keyword>
<keyword id="KW-0597">Phosphoprotein</keyword>
<keyword id="KW-0645">Protease</keyword>
<keyword id="KW-1185">Reference proteome</keyword>
<keyword id="KW-0862">Zinc</keyword>
<sequence length="611" mass="69089">MPEVADTCSLASPASVCRTQHLHLRCSVDFARRALTGTAALTVQSQEDNLRSLTLDTKDLTIEKVVINGQEVKYTLGESQGYKGSPMEISLPIALSKNQEVVIEISFETSPKSSALQWLTPEQTSGKQHPYLFSQCQAIHCRAILPCQDTPSVKLTYTAEVSVPKELVALMSAIRDGEAPDPEDPSRKIYRFNQRVPIPCYLIALVVGALESRQIGPRTLVWSEKEQVEKSAYEFSETESMLKIAEDLGGPYVWGQYDLLVLPPSFPYGGMENPCLTFVTPTLLAGDKSLSNVIAHEISHSWTGNLVTNKTWDHFWLNEGHTVYLERHICGRLFGEKFRHFHALGGWGELQNTIKTFGESHPFTKLVVDLKDVDPDVAYSSIPYEKGFALLFYLEQLLGGPEVFLGFLKAYVEKFSYQSVTTDDWKSFLYAHFKDKVDLLNQVDWNAWLYAPGLPPVKPNYDVTLTNACIALSQRWVTAKEEDLNSFSIEDLKDLSSHQLNEFLAQVLQKAPLPLGHIKRMQEVYNFNAINNSEIRFRWLRLCIQSKWEEAIPLALKMATEQGRMKFTRPLFKDLAAFDKSHDQAVRTYQEHKACMHPVTAMLVGKDLKVD</sequence>
<feature type="chain" id="PRO_0000095126" description="Leukotriene A-4 hydrolase">
    <location>
        <begin position="1"/>
        <end position="611"/>
    </location>
</feature>
<feature type="active site" description="Proton acceptor" evidence="1">
    <location>
        <position position="297"/>
    </location>
</feature>
<feature type="active site" description="Proton donor" evidence="1">
    <location>
        <position position="384"/>
    </location>
</feature>
<feature type="binding site" evidence="1">
    <location>
        <begin position="135"/>
        <end position="137"/>
    </location>
    <ligand>
        <name>a peptide</name>
        <dbReference type="ChEBI" id="CHEBI:60466"/>
    </ligand>
</feature>
<feature type="binding site" evidence="1">
    <location>
        <begin position="267"/>
        <end position="272"/>
    </location>
    <ligand>
        <name>a peptide</name>
        <dbReference type="ChEBI" id="CHEBI:60466"/>
    </ligand>
</feature>
<feature type="binding site" evidence="1">
    <location>
        <position position="296"/>
    </location>
    <ligand>
        <name>Zn(2+)</name>
        <dbReference type="ChEBI" id="CHEBI:29105"/>
        <note>catalytic</note>
    </ligand>
</feature>
<feature type="binding site" evidence="1">
    <location>
        <position position="300"/>
    </location>
    <ligand>
        <name>Zn(2+)</name>
        <dbReference type="ChEBI" id="CHEBI:29105"/>
        <note>catalytic</note>
    </ligand>
</feature>
<feature type="binding site" evidence="1">
    <location>
        <position position="319"/>
    </location>
    <ligand>
        <name>Zn(2+)</name>
        <dbReference type="ChEBI" id="CHEBI:29105"/>
        <note>catalytic</note>
    </ligand>
</feature>
<feature type="binding site" evidence="1">
    <location>
        <begin position="564"/>
        <end position="566"/>
    </location>
    <ligand>
        <name>a peptide</name>
        <dbReference type="ChEBI" id="CHEBI:60466"/>
    </ligand>
</feature>
<feature type="site" description="Essential for epoxide hydrolase activity, but not for aminopeptidase activity" evidence="1">
    <location>
        <position position="376"/>
    </location>
</feature>
<feature type="site" description="Covalently modified during suicide inhibition by leukotrienes" evidence="1">
    <location>
        <position position="379"/>
    </location>
</feature>
<feature type="modified residue" description="N6-acetyllysine" evidence="1">
    <location>
        <position position="73"/>
    </location>
</feature>
<feature type="modified residue" description="N6-acetyllysine" evidence="1">
    <location>
        <position position="337"/>
    </location>
</feature>
<feature type="modified residue" description="N6-acetyllysine" evidence="1">
    <location>
        <position position="414"/>
    </location>
</feature>
<feature type="modified residue" description="Phosphoserine" evidence="1">
    <location>
        <position position="416"/>
    </location>
</feature>
<feature type="modified residue" description="N6-acetyllysine" evidence="1">
    <location>
        <position position="573"/>
    </location>
</feature>
<feature type="sequence conflict" description="In Ref. 1; AAB21778." evidence="3" ref="1">
    <original>A</original>
    <variation>E</variation>
    <location>
        <position position="5"/>
    </location>
</feature>
<feature type="sequence conflict" description="In Ref. 1; AAB21778." evidence="3" ref="1">
    <original>S</original>
    <variation>T</variation>
    <location>
        <position position="52"/>
    </location>
</feature>
<feature type="sequence conflict" description="In Ref. 1; AAB21778." evidence="3" ref="1">
    <original>CQ</original>
    <variation>WE</variation>
    <location>
        <begin position="136"/>
        <end position="137"/>
    </location>
</feature>
<feature type="sequence conflict" description="In Ref. 1; AAB21778." evidence="3" ref="1">
    <location>
        <position position="151"/>
    </location>
</feature>
<feature type="sequence conflict" description="In Ref. 1; AAB21778." evidence="3" ref="1">
    <original>K</original>
    <variation>R</variation>
    <location>
        <position position="510"/>
    </location>
</feature>
<gene>
    <name type="primary">Lta4h</name>
</gene>
<protein>
    <recommendedName>
        <fullName>Leukotriene A-4 hydrolase</fullName>
        <shortName>LTA-4 hydrolase</shortName>
        <ecNumber evidence="2">3.3.2.6</ecNumber>
    </recommendedName>
    <alternativeName>
        <fullName>Leukotriene A(4) hydrolase</fullName>
    </alternativeName>
    <alternativeName>
        <fullName evidence="3">Tripeptide aminopeptidase LTA4H</fullName>
        <ecNumber evidence="1">3.4.11.4</ecNumber>
    </alternativeName>
</protein>